<comment type="subcellular location">
    <subcellularLocation>
        <location evidence="1">Cell membrane</location>
        <topology evidence="1">Multi-pass membrane protein</topology>
    </subcellularLocation>
</comment>
<comment type="similarity">
    <text evidence="1">Belongs to the UPF0756 family.</text>
</comment>
<dbReference type="EMBL" id="CP000569">
    <property type="protein sequence ID" value="ABN73470.1"/>
    <property type="molecule type" value="Genomic_DNA"/>
</dbReference>
<dbReference type="RefSeq" id="WP_005600468.1">
    <property type="nucleotide sequence ID" value="NC_009053.1"/>
</dbReference>
<dbReference type="STRING" id="416269.APL_0366"/>
<dbReference type="EnsemblBacteria" id="ABN73470">
    <property type="protein sequence ID" value="ABN73470"/>
    <property type="gene ID" value="APL_0366"/>
</dbReference>
<dbReference type="KEGG" id="apl:APL_0366"/>
<dbReference type="eggNOG" id="COG2707">
    <property type="taxonomic scope" value="Bacteria"/>
</dbReference>
<dbReference type="HOGENOM" id="CLU_125889_0_0_6"/>
<dbReference type="Proteomes" id="UP000001432">
    <property type="component" value="Chromosome"/>
</dbReference>
<dbReference type="GO" id="GO:0005886">
    <property type="term" value="C:plasma membrane"/>
    <property type="evidence" value="ECO:0007669"/>
    <property type="project" value="UniProtKB-SubCell"/>
</dbReference>
<dbReference type="HAMAP" id="MF_01874">
    <property type="entry name" value="UPF0756"/>
    <property type="match status" value="1"/>
</dbReference>
<dbReference type="InterPro" id="IPR007382">
    <property type="entry name" value="UPF0756_TM"/>
</dbReference>
<dbReference type="PANTHER" id="PTHR38452">
    <property type="entry name" value="UPF0756 MEMBRANE PROTEIN YEAL"/>
    <property type="match status" value="1"/>
</dbReference>
<dbReference type="PANTHER" id="PTHR38452:SF1">
    <property type="entry name" value="UPF0756 MEMBRANE PROTEIN YEAL"/>
    <property type="match status" value="1"/>
</dbReference>
<dbReference type="Pfam" id="PF04284">
    <property type="entry name" value="DUF441"/>
    <property type="match status" value="1"/>
</dbReference>
<proteinExistence type="inferred from homology"/>
<name>Y366_ACTP2</name>
<gene>
    <name type="ordered locus">APL_0366</name>
</gene>
<organism>
    <name type="scientific">Actinobacillus pleuropneumoniae serotype 5b (strain L20)</name>
    <dbReference type="NCBI Taxonomy" id="416269"/>
    <lineage>
        <taxon>Bacteria</taxon>
        <taxon>Pseudomonadati</taxon>
        <taxon>Pseudomonadota</taxon>
        <taxon>Gammaproteobacteria</taxon>
        <taxon>Pasteurellales</taxon>
        <taxon>Pasteurellaceae</taxon>
        <taxon>Actinobacillus</taxon>
    </lineage>
</organism>
<feature type="chain" id="PRO_0000388813" description="UPF0756 membrane protein APL_0366">
    <location>
        <begin position="1"/>
        <end position="150"/>
    </location>
</feature>
<feature type="transmembrane region" description="Helical" evidence="1">
    <location>
        <begin position="12"/>
        <end position="34"/>
    </location>
</feature>
<feature type="transmembrane region" description="Helical" evidence="1">
    <location>
        <begin position="52"/>
        <end position="72"/>
    </location>
</feature>
<feature type="transmembrane region" description="Helical" evidence="1">
    <location>
        <begin position="82"/>
        <end position="102"/>
    </location>
</feature>
<feature type="transmembrane region" description="Helical" evidence="1">
    <location>
        <begin position="123"/>
        <end position="143"/>
    </location>
</feature>
<protein>
    <recommendedName>
        <fullName evidence="1">UPF0756 membrane protein APL_0366</fullName>
    </recommendedName>
</protein>
<accession>A3MZ84</accession>
<sequence>MSLQFNPISLFLVVLIFLGVVGNNNSITIAATVLLLVQQTFLSKYLPFLDKHGLSIGIIILTIGVLSPIVSGKISLPSFSEFLNWKMLLAVVAGIAVAWLGGRGVSLMGGQPLLVTGLLVGTIIGVALLGGVPVGPLIAAGILSLLIGKG</sequence>
<reference key="1">
    <citation type="journal article" date="2008" name="J. Bacteriol.">
        <title>The complete genome sequence of Actinobacillus pleuropneumoniae L20 (serotype 5b).</title>
        <authorList>
            <person name="Foote S.J."/>
            <person name="Bosse J.T."/>
            <person name="Bouevitch A.B."/>
            <person name="Langford P.R."/>
            <person name="Young N.M."/>
            <person name="Nash J.H.E."/>
        </authorList>
    </citation>
    <scope>NUCLEOTIDE SEQUENCE [LARGE SCALE GENOMIC DNA]</scope>
    <source>
        <strain>L20</strain>
    </source>
</reference>
<evidence type="ECO:0000255" key="1">
    <source>
        <dbReference type="HAMAP-Rule" id="MF_01874"/>
    </source>
</evidence>
<keyword id="KW-1003">Cell membrane</keyword>
<keyword id="KW-0472">Membrane</keyword>
<keyword id="KW-1185">Reference proteome</keyword>
<keyword id="KW-0812">Transmembrane</keyword>
<keyword id="KW-1133">Transmembrane helix</keyword>